<feature type="chain" id="PRO_0000311639" description="Protein PB1-F2">
    <location>
        <begin position="1"/>
        <end position="90"/>
    </location>
</feature>
<feature type="region of interest" description="Disordered" evidence="2">
    <location>
        <begin position="1"/>
        <end position="31"/>
    </location>
</feature>
<feature type="region of interest" description="Mitochondrial targeting sequence" evidence="1">
    <location>
        <begin position="65"/>
        <end position="87"/>
    </location>
</feature>
<feature type="compositionally biased region" description="Polar residues" evidence="2">
    <location>
        <begin position="1"/>
        <end position="27"/>
    </location>
</feature>
<feature type="site" description="High pathogenicity" evidence="1">
    <location>
        <position position="66"/>
    </location>
</feature>
<reference key="1">
    <citation type="journal article" date="2002" name="Proc. Natl. Acad. Sci. U.S.A.">
        <title>Emergence of multiple genotypes of H5N1 avian influenza viruses in Hong Kong SAR.</title>
        <authorList>
            <person name="Guan Y."/>
            <person name="Peiris J.S.M."/>
            <person name="Lipatov A.S."/>
            <person name="Ellis T.M."/>
            <person name="Dyrting K.C."/>
            <person name="Krauss S."/>
            <person name="Zhang L.J."/>
            <person name="Webster R.G."/>
            <person name="Shortridge K.F."/>
        </authorList>
    </citation>
    <scope>NUCLEOTIDE SEQUENCE [GENOMIC RNA]</scope>
</reference>
<accession>P0C5U8</accession>
<dbReference type="EMBL" id="AF509172">
    <property type="status" value="NOT_ANNOTATED_CDS"/>
    <property type="molecule type" value="Genomic_DNA"/>
</dbReference>
<dbReference type="SMR" id="P0C5U8"/>
<dbReference type="GO" id="GO:0044164">
    <property type="term" value="C:host cell cytosol"/>
    <property type="evidence" value="ECO:0007669"/>
    <property type="project" value="UniProtKB-SubCell"/>
</dbReference>
<dbReference type="GO" id="GO:0044192">
    <property type="term" value="C:host cell mitochondrial inner membrane"/>
    <property type="evidence" value="ECO:0007669"/>
    <property type="project" value="UniProtKB-SubCell"/>
</dbReference>
<dbReference type="GO" id="GO:0042025">
    <property type="term" value="C:host cell nucleus"/>
    <property type="evidence" value="ECO:0007669"/>
    <property type="project" value="UniProtKB-SubCell"/>
</dbReference>
<dbReference type="GO" id="GO:0016020">
    <property type="term" value="C:membrane"/>
    <property type="evidence" value="ECO:0007669"/>
    <property type="project" value="UniProtKB-UniRule"/>
</dbReference>
<dbReference type="GO" id="GO:0052150">
    <property type="term" value="P:symbiont-mediated perturbation of host apoptosis"/>
    <property type="evidence" value="ECO:0007669"/>
    <property type="project" value="UniProtKB-KW"/>
</dbReference>
<dbReference type="GO" id="GO:0039545">
    <property type="term" value="P:symbiont-mediated suppression of host cytoplasmic pattern recognition receptor signaling pathway via inhibition of MAVS activity"/>
    <property type="evidence" value="ECO:0007669"/>
    <property type="project" value="UniProtKB-KW"/>
</dbReference>
<dbReference type="HAMAP" id="MF_04064">
    <property type="entry name" value="INFV_PB1F2"/>
    <property type="match status" value="1"/>
</dbReference>
<dbReference type="InterPro" id="IPR021045">
    <property type="entry name" value="Flu_proapoptotic_PB1-F2"/>
</dbReference>
<dbReference type="Pfam" id="PF11986">
    <property type="entry name" value="PB1-F2"/>
    <property type="match status" value="1"/>
</dbReference>
<evidence type="ECO:0000255" key="1">
    <source>
        <dbReference type="HAMAP-Rule" id="MF_04064"/>
    </source>
</evidence>
<evidence type="ECO:0000256" key="2">
    <source>
        <dbReference type="SAM" id="MobiDB-lite"/>
    </source>
</evidence>
<protein>
    <recommendedName>
        <fullName evidence="1">Protein PB1-F2</fullName>
    </recommendedName>
</protein>
<gene>
    <name evidence="1" type="primary">PB1</name>
</gene>
<comment type="function">
    <text evidence="1">Plays an important role in promoting lung pathology in both primary viral infection and secondary bacterial infection. Promotes alteration of mitochondrial morphology, dissipation of mitochondrial membrane potential, and cell death. Alternatively, inhibits the production of interferon in the infected cell at the level of host mitochondrial antiviral signaling MAVS. Its level of expression differs greatly depending on which cell type is infected, in a manner that is independent of the levels of expression of other viral proteins. Monocytic cells are more affected than epithelial cells. Seems to disable virus-infected monocytes or other host innate immune cells. During early stage of infection, predisposes the mitochondria to permeability transition through interaction with host SLC25A6/ANT3 and VDAC1. These proteins participate in the formation of the permeability transition pore complex (PTPC) responsible of the release of mitochondrial products that triggers apoptosis.</text>
</comment>
<comment type="subunit">
    <text evidence="1">Oligomer. Interacts with human SLC25A6/ANT3 and VDAC1. Interacts with host MAVS.</text>
</comment>
<comment type="subcellular location">
    <subcellularLocation>
        <location evidence="1">Host mitochondrion inner membrane</location>
    </subcellularLocation>
    <subcellularLocation>
        <location evidence="1">Host nucleus</location>
    </subcellularLocation>
    <subcellularLocation>
        <location evidence="1">Host cytoplasm</location>
        <location evidence="1">Host cytosol</location>
    </subcellularLocation>
    <text evidence="1">Inner mitochondrial membrane in most cells types. Otherwise is detected in the nucleus and cytosol.</text>
</comment>
<comment type="miscellaneous">
    <text>Is not encoded in all strains, and seems to be dispensable for replication.</text>
</comment>
<comment type="similarity">
    <text evidence="1">Belongs to the influenza viruses PB1-F2 family.</text>
</comment>
<sequence>MEQEQDTPWTQSTEHINIQKRGNGQRTQRLEHPNSIRLMDHCLRIMSRVGMHRQIVYWKQWLSLKSPTQGSLKTRVLKRWKLFSKQEWIN</sequence>
<keyword id="KW-0053">Apoptosis</keyword>
<keyword id="KW-1035">Host cytoplasm</keyword>
<keyword id="KW-1043">Host membrane</keyword>
<keyword id="KW-1045">Host mitochondrion</keyword>
<keyword id="KW-1046">Host mitochondrion inner membrane</keyword>
<keyword id="KW-1048">Host nucleus</keyword>
<keyword id="KW-0945">Host-virus interaction</keyword>
<keyword id="KW-1090">Inhibition of host innate immune response by virus</keyword>
<keyword id="KW-1097">Inhibition of host MAVS by virus</keyword>
<keyword id="KW-1113">Inhibition of host RLR pathway by virus</keyword>
<keyword id="KW-0472">Membrane</keyword>
<keyword id="KW-1119">Modulation of host cell apoptosis by virus</keyword>
<keyword id="KW-0899">Viral immunoevasion</keyword>
<proteinExistence type="inferred from homology"/>
<name>PB1F2_I01A2</name>
<organismHost>
    <name type="scientific">Aves</name>
    <dbReference type="NCBI Taxonomy" id="8782"/>
</organismHost>
<organismHost>
    <name type="scientific">Felis catus</name>
    <name type="common">Cat</name>
    <name type="synonym">Felis silvestris catus</name>
    <dbReference type="NCBI Taxonomy" id="9685"/>
</organismHost>
<organismHost>
    <name type="scientific">Homo sapiens</name>
    <name type="common">Human</name>
    <dbReference type="NCBI Taxonomy" id="9606"/>
</organismHost>
<organismHost>
    <name type="scientific">Panthera pardus</name>
    <name type="common">Leopard</name>
    <name type="synonym">Felis pardus</name>
    <dbReference type="NCBI Taxonomy" id="9691"/>
</organismHost>
<organismHost>
    <name type="scientific">Panthera tigris</name>
    <name type="common">Tiger</name>
    <dbReference type="NCBI Taxonomy" id="9694"/>
</organismHost>
<organismHost>
    <name type="scientific">Sus scrofa</name>
    <name type="common">Pig</name>
    <dbReference type="NCBI Taxonomy" id="9823"/>
</organismHost>
<organism>
    <name type="scientific">Influenza A virus (strain A/Chicken/Hong Kong/FY150/2001 H5N1 genotype D)</name>
    <dbReference type="NCBI Taxonomy" id="222142"/>
    <lineage>
        <taxon>Viruses</taxon>
        <taxon>Riboviria</taxon>
        <taxon>Orthornavirae</taxon>
        <taxon>Negarnaviricota</taxon>
        <taxon>Polyploviricotina</taxon>
        <taxon>Insthoviricetes</taxon>
        <taxon>Articulavirales</taxon>
        <taxon>Orthomyxoviridae</taxon>
        <taxon>Alphainfluenzavirus</taxon>
        <taxon>Alphainfluenzavirus influenzae</taxon>
        <taxon>Influenza A virus</taxon>
    </lineage>
</organism>